<evidence type="ECO:0000255" key="1">
    <source>
        <dbReference type="HAMAP-Rule" id="MF_03112"/>
    </source>
</evidence>
<organism>
    <name type="scientific">Coccidioides immitis (strain RS)</name>
    <name type="common">Valley fever fungus</name>
    <dbReference type="NCBI Taxonomy" id="246410"/>
    <lineage>
        <taxon>Eukaryota</taxon>
        <taxon>Fungi</taxon>
        <taxon>Dikarya</taxon>
        <taxon>Ascomycota</taxon>
        <taxon>Pezizomycotina</taxon>
        <taxon>Eurotiomycetes</taxon>
        <taxon>Eurotiomycetidae</taxon>
        <taxon>Onygenales</taxon>
        <taxon>Onygenaceae</taxon>
        <taxon>Coccidioides</taxon>
    </lineage>
</organism>
<reference key="1">
    <citation type="journal article" date="2009" name="Genome Res.">
        <title>Comparative genomic analyses of the human fungal pathogens Coccidioides and their relatives.</title>
        <authorList>
            <person name="Sharpton T.J."/>
            <person name="Stajich J.E."/>
            <person name="Rounsley S.D."/>
            <person name="Gardner M.J."/>
            <person name="Wortman J.R."/>
            <person name="Jordar V.S."/>
            <person name="Maiti R."/>
            <person name="Kodira C.D."/>
            <person name="Neafsey D.E."/>
            <person name="Zeng Q."/>
            <person name="Hung C.-Y."/>
            <person name="McMahan C."/>
            <person name="Muszewska A."/>
            <person name="Grynberg M."/>
            <person name="Mandel M.A."/>
            <person name="Kellner E.M."/>
            <person name="Barker B.M."/>
            <person name="Galgiani J.N."/>
            <person name="Orbach M.J."/>
            <person name="Kirkland T.N."/>
            <person name="Cole G.T."/>
            <person name="Henn M.R."/>
            <person name="Birren B.W."/>
            <person name="Taylor J.W."/>
        </authorList>
    </citation>
    <scope>NUCLEOTIDE SEQUENCE [LARGE SCALE GENOMIC DNA]</scope>
    <source>
        <strain>RS</strain>
    </source>
</reference>
<reference key="2">
    <citation type="journal article" date="2010" name="Genome Res.">
        <title>Population genomic sequencing of Coccidioides fungi reveals recent hybridization and transposon control.</title>
        <authorList>
            <person name="Neafsey D.E."/>
            <person name="Barker B.M."/>
            <person name="Sharpton T.J."/>
            <person name="Stajich J.E."/>
            <person name="Park D.J."/>
            <person name="Whiston E."/>
            <person name="Hung C.-Y."/>
            <person name="McMahan C."/>
            <person name="White J."/>
            <person name="Sykes S."/>
            <person name="Heiman D."/>
            <person name="Young S."/>
            <person name="Zeng Q."/>
            <person name="Abouelleil A."/>
            <person name="Aftuck L."/>
            <person name="Bessette D."/>
            <person name="Brown A."/>
            <person name="FitzGerald M."/>
            <person name="Lui A."/>
            <person name="Macdonald J.P."/>
            <person name="Priest M."/>
            <person name="Orbach M.J."/>
            <person name="Galgiani J.N."/>
            <person name="Kirkland T.N."/>
            <person name="Cole G.T."/>
            <person name="Birren B.W."/>
            <person name="Henn M.R."/>
            <person name="Taylor J.W."/>
            <person name="Rounsley S.D."/>
        </authorList>
    </citation>
    <scope>GENOME REANNOTATION</scope>
    <source>
        <strain>RS</strain>
    </source>
</reference>
<gene>
    <name evidence="1" type="primary">GET3</name>
    <name type="ORF">CIMG_03696</name>
</gene>
<name>GET3_COCIM</name>
<accession>Q1E167</accession>
<accession>J3KC87</accession>
<dbReference type="EC" id="3.6.-.-" evidence="1"/>
<dbReference type="EMBL" id="GG704916">
    <property type="protein sequence ID" value="EAS32672.3"/>
    <property type="molecule type" value="Genomic_DNA"/>
</dbReference>
<dbReference type="RefSeq" id="XP_001244255.1">
    <property type="nucleotide sequence ID" value="XM_001244254.2"/>
</dbReference>
<dbReference type="SMR" id="Q1E167"/>
<dbReference type="FunCoup" id="Q1E167">
    <property type="interactions" value="944"/>
</dbReference>
<dbReference type="STRING" id="246410.Q1E167"/>
<dbReference type="GeneID" id="4563354"/>
<dbReference type="KEGG" id="cim:CIMG_03696"/>
<dbReference type="VEuPathDB" id="FungiDB:CIMG_03696"/>
<dbReference type="InParanoid" id="Q1E167"/>
<dbReference type="OMA" id="MDAPYEF"/>
<dbReference type="OrthoDB" id="1770at2759"/>
<dbReference type="Proteomes" id="UP000001261">
    <property type="component" value="Unassembled WGS sequence"/>
</dbReference>
<dbReference type="GO" id="GO:0043529">
    <property type="term" value="C:GET complex"/>
    <property type="evidence" value="ECO:0007669"/>
    <property type="project" value="TreeGrafter"/>
</dbReference>
<dbReference type="GO" id="GO:0005524">
    <property type="term" value="F:ATP binding"/>
    <property type="evidence" value="ECO:0007669"/>
    <property type="project" value="UniProtKB-UniRule"/>
</dbReference>
<dbReference type="GO" id="GO:0016887">
    <property type="term" value="F:ATP hydrolysis activity"/>
    <property type="evidence" value="ECO:0007669"/>
    <property type="project" value="InterPro"/>
</dbReference>
<dbReference type="GO" id="GO:0046872">
    <property type="term" value="F:metal ion binding"/>
    <property type="evidence" value="ECO:0007669"/>
    <property type="project" value="UniProtKB-KW"/>
</dbReference>
<dbReference type="GO" id="GO:0071816">
    <property type="term" value="P:tail-anchored membrane protein insertion into ER membrane"/>
    <property type="evidence" value="ECO:0007669"/>
    <property type="project" value="TreeGrafter"/>
</dbReference>
<dbReference type="CDD" id="cd02035">
    <property type="entry name" value="ArsA"/>
    <property type="match status" value="1"/>
</dbReference>
<dbReference type="FunFam" id="3.40.50.300:FF:000235">
    <property type="entry name" value="ATPase ASNA1"/>
    <property type="match status" value="1"/>
</dbReference>
<dbReference type="Gene3D" id="3.40.50.300">
    <property type="entry name" value="P-loop containing nucleotide triphosphate hydrolases"/>
    <property type="match status" value="1"/>
</dbReference>
<dbReference type="HAMAP" id="MF_03112">
    <property type="entry name" value="Asna1_Get3"/>
    <property type="match status" value="1"/>
</dbReference>
<dbReference type="InterPro" id="IPR025723">
    <property type="entry name" value="Anion-transp_ATPase-like_dom"/>
</dbReference>
<dbReference type="InterPro" id="IPR016300">
    <property type="entry name" value="ATPase_ArsA/GET3"/>
</dbReference>
<dbReference type="InterPro" id="IPR027542">
    <property type="entry name" value="ATPase_ArsA/GET3_euk"/>
</dbReference>
<dbReference type="InterPro" id="IPR027417">
    <property type="entry name" value="P-loop_NTPase"/>
</dbReference>
<dbReference type="NCBIfam" id="TIGR00345">
    <property type="entry name" value="GET3_arsA_TRC40"/>
    <property type="match status" value="1"/>
</dbReference>
<dbReference type="PANTHER" id="PTHR10803">
    <property type="entry name" value="ARSENICAL PUMP-DRIVING ATPASE ARSENITE-TRANSLOCATING ATPASE"/>
    <property type="match status" value="1"/>
</dbReference>
<dbReference type="PANTHER" id="PTHR10803:SF3">
    <property type="entry name" value="ATPASE GET3"/>
    <property type="match status" value="1"/>
</dbReference>
<dbReference type="Pfam" id="PF02374">
    <property type="entry name" value="ArsA_ATPase"/>
    <property type="match status" value="1"/>
</dbReference>
<dbReference type="SUPFAM" id="SSF52540">
    <property type="entry name" value="P-loop containing nucleoside triphosphate hydrolases"/>
    <property type="match status" value="1"/>
</dbReference>
<feature type="chain" id="PRO_0000388202" description="ATPase GET3">
    <location>
        <begin position="1"/>
        <end position="339"/>
    </location>
</feature>
<feature type="active site" evidence="1">
    <location>
        <position position="63"/>
    </location>
</feature>
<feature type="binding site" evidence="1">
    <location>
        <begin position="34"/>
        <end position="41"/>
    </location>
    <ligand>
        <name>ATP</name>
        <dbReference type="ChEBI" id="CHEBI:30616"/>
    </ligand>
</feature>
<feature type="binding site" evidence="1">
    <location>
        <position position="243"/>
    </location>
    <ligand>
        <name>ATP</name>
        <dbReference type="ChEBI" id="CHEBI:30616"/>
    </ligand>
</feature>
<feature type="binding site" evidence="1">
    <location>
        <position position="270"/>
    </location>
    <ligand>
        <name>ATP</name>
        <dbReference type="ChEBI" id="CHEBI:30616"/>
    </ligand>
</feature>
<feature type="binding site" evidence="1">
    <location>
        <position position="281"/>
    </location>
    <ligand>
        <name>Zn(2+)</name>
        <dbReference type="ChEBI" id="CHEBI:29105"/>
        <note>ligand shared between dimeric partners</note>
    </ligand>
</feature>
<feature type="binding site" evidence="1">
    <location>
        <position position="284"/>
    </location>
    <ligand>
        <name>Zn(2+)</name>
        <dbReference type="ChEBI" id="CHEBI:29105"/>
        <note>ligand shared between dimeric partners</note>
    </ligand>
</feature>
<comment type="function">
    <text evidence="1">ATPase required for the post-translational delivery of tail-anchored (TA) proteins to the endoplasmic reticulum. Recognizes and selectively binds the transmembrane domain of TA proteins in the cytosol. This complex then targets to the endoplasmic reticulum by membrane-bound receptors, where the tail-anchored protein is released for insertion. This process is regulated by ATP binding and hydrolysis. ATP binding drives the homodimer towards the closed dimer state, facilitating recognition of newly synthesized TA membrane proteins. ATP hydrolysis is required for insertion. Subsequently, the homodimer reverts towards the open dimer state, lowering its affinity for the membrane-bound receptor, and returning it to the cytosol to initiate a new round of targeting.</text>
</comment>
<comment type="subunit">
    <text evidence="1">Homodimer.</text>
</comment>
<comment type="subcellular location">
    <subcellularLocation>
        <location evidence="1">Cytoplasm</location>
    </subcellularLocation>
    <subcellularLocation>
        <location evidence="1">Endoplasmic reticulum</location>
    </subcellularLocation>
</comment>
<comment type="similarity">
    <text evidence="1">Belongs to the arsA ATPase family.</text>
</comment>
<sequence>MSSAALVPADDILEPTLQSILDQKSLRWIFVGGKGGVGKTTTSCSLAIQLAKVRKSVLLISTDPAHNLSDAFGQKFGKEARLVDGFDNLSAMEIDPSASMQDLLAAGGEQGEDMGFGLGGMMQDLAFSIPGVDEAMSFAEVLKQVKSLSYEVIVFDTAPTGHTLRFLQFPTVLEKGLAKLSQLSNQFGPMLNSVLGARGGLPGGQNLDEVLSKMESLRETISEVNAQFKDADLTTFVCVCIAEFLSLYETERMIQELTSYQIDTHAIVVNQLLFPGKDSTCEQCKARRKMQKKYLDEIAELYEDFNVVRMPLLVEEVRGKEKLERFSDMLVHPYQPPQE</sequence>
<protein>
    <recommendedName>
        <fullName evidence="1">ATPase GET3</fullName>
        <ecNumber evidence="1">3.6.-.-</ecNumber>
    </recommendedName>
    <alternativeName>
        <fullName evidence="1">Arsenical pump-driving ATPase</fullName>
    </alternativeName>
    <alternativeName>
        <fullName evidence="1">Arsenite-stimulated ATPase</fullName>
    </alternativeName>
    <alternativeName>
        <fullName evidence="1">Golgi to ER traffic protein 3</fullName>
    </alternativeName>
    <alternativeName>
        <fullName evidence="1">Guided entry of tail-anchored proteins 3</fullName>
    </alternativeName>
</protein>
<proteinExistence type="inferred from homology"/>
<keyword id="KW-0067">ATP-binding</keyword>
<keyword id="KW-0963">Cytoplasm</keyword>
<keyword id="KW-0256">Endoplasmic reticulum</keyword>
<keyword id="KW-0378">Hydrolase</keyword>
<keyword id="KW-0479">Metal-binding</keyword>
<keyword id="KW-0547">Nucleotide-binding</keyword>
<keyword id="KW-1185">Reference proteome</keyword>
<keyword id="KW-0813">Transport</keyword>
<keyword id="KW-0862">Zinc</keyword>